<protein>
    <recommendedName>
        <fullName>UDP-glucose 4-epimerase</fullName>
        <ecNumber>5.1.3.2</ecNumber>
    </recommendedName>
    <alternativeName>
        <fullName>Galactowaldenase</fullName>
    </alternativeName>
    <alternativeName>
        <fullName>UDP-galactose 4-epimerase</fullName>
    </alternativeName>
</protein>
<proteinExistence type="inferred from homology"/>
<organism>
    <name type="scientific">Salmonella typhi</name>
    <dbReference type="NCBI Taxonomy" id="90370"/>
    <lineage>
        <taxon>Bacteria</taxon>
        <taxon>Pseudomonadati</taxon>
        <taxon>Pseudomonadota</taxon>
        <taxon>Gammaproteobacteria</taxon>
        <taxon>Enterobacterales</taxon>
        <taxon>Enterobacteriaceae</taxon>
        <taxon>Salmonella</taxon>
    </lineage>
</organism>
<gene>
    <name type="primary">galE</name>
    <name type="ordered locus">STY0809</name>
    <name type="ordered locus">t2111</name>
</gene>
<name>GALE_SALTI</name>
<keyword id="KW-0119">Carbohydrate metabolism</keyword>
<keyword id="KW-0299">Galactose metabolism</keyword>
<keyword id="KW-0413">Isomerase</keyword>
<keyword id="KW-0520">NAD</keyword>
<evidence type="ECO:0000250" key="1"/>
<evidence type="ECO:0000305" key="2"/>
<comment type="function">
    <text evidence="1">Involved in the metabolism of galactose. Catalyzes the conversion of UDP-galactose (UDP-Gal) to UDP-glucose (UDP-Glc) through a mechanism involving the transient reduction of NAD (By similarity).</text>
</comment>
<comment type="catalytic activity">
    <reaction>
        <text>UDP-alpha-D-glucose = UDP-alpha-D-galactose</text>
        <dbReference type="Rhea" id="RHEA:22168"/>
        <dbReference type="ChEBI" id="CHEBI:58885"/>
        <dbReference type="ChEBI" id="CHEBI:66914"/>
        <dbReference type="EC" id="5.1.3.2"/>
    </reaction>
</comment>
<comment type="cofactor">
    <cofactor>
        <name>NAD(+)</name>
        <dbReference type="ChEBI" id="CHEBI:57540"/>
    </cofactor>
</comment>
<comment type="pathway">
    <text>Carbohydrate metabolism; galactose metabolism.</text>
</comment>
<comment type="subunit">
    <text evidence="1">Homodimer.</text>
</comment>
<comment type="similarity">
    <text evidence="2">Belongs to the NAD(P)-dependent epimerase/dehydratase family.</text>
</comment>
<accession>Q56093</accession>
<reference key="1">
    <citation type="journal article" date="1995" name="Microbiology">
        <title>Attenuated typhoid vaccine Salmonella typhi Ty21a: fingerprinting and quality control.</title>
        <authorList>
            <person name="McKenna A.J."/>
            <person name="Bygraves J.A."/>
            <person name="Maiden M.C.J."/>
            <person name="Feavers I.M."/>
        </authorList>
    </citation>
    <scope>NUCLEOTIDE SEQUENCE [GENOMIC DNA]</scope>
    <source>
        <strain>ATCC 700931 / Ty2</strain>
    </source>
</reference>
<reference key="2">
    <citation type="journal article" date="2001" name="Nature">
        <title>Complete genome sequence of a multiple drug resistant Salmonella enterica serovar Typhi CT18.</title>
        <authorList>
            <person name="Parkhill J."/>
            <person name="Dougan G."/>
            <person name="James K.D."/>
            <person name="Thomson N.R."/>
            <person name="Pickard D."/>
            <person name="Wain J."/>
            <person name="Churcher C.M."/>
            <person name="Mungall K.L."/>
            <person name="Bentley S.D."/>
            <person name="Holden M.T.G."/>
            <person name="Sebaihia M."/>
            <person name="Baker S."/>
            <person name="Basham D."/>
            <person name="Brooks K."/>
            <person name="Chillingworth T."/>
            <person name="Connerton P."/>
            <person name="Cronin A."/>
            <person name="Davis P."/>
            <person name="Davies R.M."/>
            <person name="Dowd L."/>
            <person name="White N."/>
            <person name="Farrar J."/>
            <person name="Feltwell T."/>
            <person name="Hamlin N."/>
            <person name="Haque A."/>
            <person name="Hien T.T."/>
            <person name="Holroyd S."/>
            <person name="Jagels K."/>
            <person name="Krogh A."/>
            <person name="Larsen T.S."/>
            <person name="Leather S."/>
            <person name="Moule S."/>
            <person name="O'Gaora P."/>
            <person name="Parry C."/>
            <person name="Quail M.A."/>
            <person name="Rutherford K.M."/>
            <person name="Simmonds M."/>
            <person name="Skelton J."/>
            <person name="Stevens K."/>
            <person name="Whitehead S."/>
            <person name="Barrell B.G."/>
        </authorList>
    </citation>
    <scope>NUCLEOTIDE SEQUENCE [LARGE SCALE GENOMIC DNA]</scope>
    <source>
        <strain>CT18</strain>
    </source>
</reference>
<reference key="3">
    <citation type="journal article" date="2003" name="J. Bacteriol.">
        <title>Comparative genomics of Salmonella enterica serovar Typhi strains Ty2 and CT18.</title>
        <authorList>
            <person name="Deng W."/>
            <person name="Liou S.-R."/>
            <person name="Plunkett G. III"/>
            <person name="Mayhew G.F."/>
            <person name="Rose D.J."/>
            <person name="Burland V."/>
            <person name="Kodoyianni V."/>
            <person name="Schwartz D.C."/>
            <person name="Blattner F.R."/>
        </authorList>
    </citation>
    <scope>NUCLEOTIDE SEQUENCE [LARGE SCALE GENOMIC DNA]</scope>
    <source>
        <strain>ATCC 700931 / Ty2</strain>
    </source>
</reference>
<feature type="chain" id="PRO_0000183217" description="UDP-glucose 4-epimerase">
    <location>
        <begin position="1"/>
        <end position="338"/>
    </location>
</feature>
<feature type="active site" description="Proton acceptor" evidence="1">
    <location>
        <position position="149"/>
    </location>
</feature>
<feature type="binding site" evidence="1">
    <location>
        <begin position="11"/>
        <end position="12"/>
    </location>
    <ligand>
        <name>NAD(+)</name>
        <dbReference type="ChEBI" id="CHEBI:57540"/>
    </ligand>
</feature>
<feature type="binding site" evidence="1">
    <location>
        <begin position="31"/>
        <end position="36"/>
    </location>
    <ligand>
        <name>NAD(+)</name>
        <dbReference type="ChEBI" id="CHEBI:57540"/>
    </ligand>
</feature>
<feature type="binding site" evidence="1">
    <location>
        <begin position="58"/>
        <end position="59"/>
    </location>
    <ligand>
        <name>NAD(+)</name>
        <dbReference type="ChEBI" id="CHEBI:57540"/>
    </ligand>
</feature>
<feature type="binding site" evidence="1">
    <location>
        <begin position="80"/>
        <end position="84"/>
    </location>
    <ligand>
        <name>NAD(+)</name>
        <dbReference type="ChEBI" id="CHEBI:57540"/>
    </ligand>
</feature>
<feature type="binding site" evidence="1">
    <location>
        <position position="99"/>
    </location>
    <ligand>
        <name>NAD(+)</name>
        <dbReference type="ChEBI" id="CHEBI:57540"/>
    </ligand>
</feature>
<feature type="binding site" evidence="1">
    <location>
        <position position="124"/>
    </location>
    <ligand>
        <name>NAD(+)</name>
        <dbReference type="ChEBI" id="CHEBI:57540"/>
    </ligand>
</feature>
<feature type="binding site" evidence="1">
    <location>
        <position position="124"/>
    </location>
    <ligand>
        <name>substrate</name>
    </ligand>
</feature>
<feature type="binding site" evidence="1">
    <location>
        <position position="149"/>
    </location>
    <ligand>
        <name>NAD(+)</name>
        <dbReference type="ChEBI" id="CHEBI:57540"/>
    </ligand>
</feature>
<feature type="binding site" evidence="1">
    <location>
        <position position="149"/>
    </location>
    <ligand>
        <name>substrate</name>
    </ligand>
</feature>
<feature type="binding site" evidence="1">
    <location>
        <position position="153"/>
    </location>
    <ligand>
        <name>NAD(+)</name>
        <dbReference type="ChEBI" id="CHEBI:57540"/>
    </ligand>
</feature>
<feature type="binding site" evidence="1">
    <location>
        <position position="178"/>
    </location>
    <ligand>
        <name>NAD(+)</name>
        <dbReference type="ChEBI" id="CHEBI:57540"/>
    </ligand>
</feature>
<feature type="binding site" evidence="1">
    <location>
        <position position="179"/>
    </location>
    <ligand>
        <name>substrate</name>
    </ligand>
</feature>
<feature type="binding site" evidence="1">
    <location>
        <begin position="199"/>
        <end position="200"/>
    </location>
    <ligand>
        <name>substrate</name>
    </ligand>
</feature>
<feature type="binding site" evidence="1">
    <location>
        <begin position="216"/>
        <end position="218"/>
    </location>
    <ligand>
        <name>substrate</name>
    </ligand>
</feature>
<feature type="binding site" evidence="1">
    <location>
        <position position="231"/>
    </location>
    <ligand>
        <name>substrate</name>
    </ligand>
</feature>
<feature type="binding site" evidence="1">
    <location>
        <begin position="292"/>
        <end position="295"/>
    </location>
    <ligand>
        <name>substrate</name>
    </ligand>
</feature>
<feature type="binding site" evidence="1">
    <location>
        <position position="299"/>
    </location>
    <ligand>
        <name>substrate</name>
    </ligand>
</feature>
<feature type="sequence conflict" description="In Ref. 1; CAA58779." evidence="2" ref="1">
    <original>G</original>
    <variation>A</variation>
    <location>
        <position position="335"/>
    </location>
</feature>
<sequence>MRVLVTGGSGYIGSHTCVQLLQNGHDVVILDNLCNSKRSVLPVIERLGGKHPTFVEGDIRNEALITEILHDHAIDTVIHFAGLKAVGESVAKPLEYYDNNVNGTLRLVSAMRAANVKNLIFSSSATVYGDQPKIPYVESFPTGTPQSPYGKSKLMVEQILTDLQKAQPEWSIALLRYFNPVGAHPSGDMGEDPQGIPNNLMPYIAQVAVGRRESLAVFGNDYPTEDGTGVRDYIHVMDLADGHVVAMEKLADKSGVHIYNLGAGVGSSVLDVVNAFSKACGKPINYHFAPRRDGDLPAYWADASKADRELNWRVTRTLDEMAQDTWHWQSRHPQGYSD</sequence>
<dbReference type="EC" id="5.1.3.2"/>
<dbReference type="EMBL" id="X83927">
    <property type="protein sequence ID" value="CAA58779.1"/>
    <property type="molecule type" value="Genomic_DNA"/>
</dbReference>
<dbReference type="EMBL" id="AL513382">
    <property type="protein sequence ID" value="CAD05224.1"/>
    <property type="molecule type" value="Genomic_DNA"/>
</dbReference>
<dbReference type="EMBL" id="AE014613">
    <property type="protein sequence ID" value="AAO69728.1"/>
    <property type="molecule type" value="Genomic_DNA"/>
</dbReference>
<dbReference type="PIR" id="S51328">
    <property type="entry name" value="S51328"/>
</dbReference>
<dbReference type="RefSeq" id="NP_455318.1">
    <property type="nucleotide sequence ID" value="NC_003198.1"/>
</dbReference>
<dbReference type="RefSeq" id="WP_001265456.1">
    <property type="nucleotide sequence ID" value="NZ_WSUR01000021.1"/>
</dbReference>
<dbReference type="SMR" id="Q56093"/>
<dbReference type="STRING" id="220341.gene:17584814"/>
<dbReference type="KEGG" id="stt:t2111"/>
<dbReference type="KEGG" id="sty:STY0809"/>
<dbReference type="PATRIC" id="fig|220341.7.peg.813"/>
<dbReference type="eggNOG" id="COG1087">
    <property type="taxonomic scope" value="Bacteria"/>
</dbReference>
<dbReference type="HOGENOM" id="CLU_007383_1_10_6"/>
<dbReference type="OMA" id="GEHLICN"/>
<dbReference type="OrthoDB" id="9803010at2"/>
<dbReference type="UniPathway" id="UPA00214"/>
<dbReference type="Proteomes" id="UP000000541">
    <property type="component" value="Chromosome"/>
</dbReference>
<dbReference type="Proteomes" id="UP000002670">
    <property type="component" value="Chromosome"/>
</dbReference>
<dbReference type="GO" id="GO:0005829">
    <property type="term" value="C:cytosol"/>
    <property type="evidence" value="ECO:0007669"/>
    <property type="project" value="TreeGrafter"/>
</dbReference>
<dbReference type="GO" id="GO:0003978">
    <property type="term" value="F:UDP-glucose 4-epimerase activity"/>
    <property type="evidence" value="ECO:0007669"/>
    <property type="project" value="UniProtKB-EC"/>
</dbReference>
<dbReference type="GO" id="GO:0006012">
    <property type="term" value="P:galactose metabolic process"/>
    <property type="evidence" value="ECO:0007669"/>
    <property type="project" value="UniProtKB-UniPathway"/>
</dbReference>
<dbReference type="CDD" id="cd05247">
    <property type="entry name" value="UDP_G4E_1_SDR_e"/>
    <property type="match status" value="1"/>
</dbReference>
<dbReference type="FunFam" id="3.40.50.720:FF:000040">
    <property type="entry name" value="UDP-glucose 4-epimerase"/>
    <property type="match status" value="1"/>
</dbReference>
<dbReference type="Gene3D" id="3.40.50.720">
    <property type="entry name" value="NAD(P)-binding Rossmann-like Domain"/>
    <property type="match status" value="1"/>
</dbReference>
<dbReference type="Gene3D" id="3.90.25.10">
    <property type="entry name" value="UDP-galactose 4-epimerase, domain 1"/>
    <property type="match status" value="1"/>
</dbReference>
<dbReference type="InterPro" id="IPR016040">
    <property type="entry name" value="NAD(P)-bd_dom"/>
</dbReference>
<dbReference type="InterPro" id="IPR036291">
    <property type="entry name" value="NAD(P)-bd_dom_sf"/>
</dbReference>
<dbReference type="InterPro" id="IPR005886">
    <property type="entry name" value="UDP_G4E"/>
</dbReference>
<dbReference type="NCBIfam" id="TIGR01179">
    <property type="entry name" value="galE"/>
    <property type="match status" value="1"/>
</dbReference>
<dbReference type="NCBIfam" id="NF007956">
    <property type="entry name" value="PRK10675.1"/>
    <property type="match status" value="1"/>
</dbReference>
<dbReference type="PANTHER" id="PTHR43725">
    <property type="entry name" value="UDP-GLUCOSE 4-EPIMERASE"/>
    <property type="match status" value="1"/>
</dbReference>
<dbReference type="PANTHER" id="PTHR43725:SF47">
    <property type="entry name" value="UDP-GLUCOSE 4-EPIMERASE"/>
    <property type="match status" value="1"/>
</dbReference>
<dbReference type="Pfam" id="PF16363">
    <property type="entry name" value="GDP_Man_Dehyd"/>
    <property type="match status" value="1"/>
</dbReference>
<dbReference type="SUPFAM" id="SSF51735">
    <property type="entry name" value="NAD(P)-binding Rossmann-fold domains"/>
    <property type="match status" value="1"/>
</dbReference>